<organism>
    <name type="scientific">Bdellovibrio bacteriovorus (strain ATCC 15356 / DSM 50701 / NCIMB 9529 / HD100)</name>
    <dbReference type="NCBI Taxonomy" id="264462"/>
    <lineage>
        <taxon>Bacteria</taxon>
        <taxon>Pseudomonadati</taxon>
        <taxon>Bdellovibrionota</taxon>
        <taxon>Bdellovibrionia</taxon>
        <taxon>Bdellovibrionales</taxon>
        <taxon>Pseudobdellovibrionaceae</taxon>
        <taxon>Bdellovibrio</taxon>
    </lineage>
</organism>
<sequence length="204" mass="22951">MSEFSYVHTRGWVEVVVGSMFSGKTEELIRRLRRAEFARLQIQVFKPIIDKRYNEMAVTSHDLTTIDSTPIHDAEEIWNLLKPNTKVVGIDEGQFFGQNLVQIAQDLADRGLRVIIAGLDTDWQGKPFEPMPTLMAVAESVTKQHAVCVVCGAPASRTQRTAGGDGQVLVGTHDAYEARCRQHFKPEVDAPTLDWKLKREMEIS</sequence>
<evidence type="ECO:0000255" key="1">
    <source>
        <dbReference type="HAMAP-Rule" id="MF_00124"/>
    </source>
</evidence>
<dbReference type="EC" id="2.7.1.21" evidence="1"/>
<dbReference type="EMBL" id="BX842655">
    <property type="protein sequence ID" value="CAE78218.1"/>
    <property type="molecule type" value="Genomic_DNA"/>
</dbReference>
<dbReference type="RefSeq" id="WP_011165756.1">
    <property type="nucleotide sequence ID" value="NC_005363.1"/>
</dbReference>
<dbReference type="SMR" id="Q6MHW4"/>
<dbReference type="STRING" id="264462.Bd3420"/>
<dbReference type="GeneID" id="93014236"/>
<dbReference type="KEGG" id="bba:Bd3420"/>
<dbReference type="eggNOG" id="COG1435">
    <property type="taxonomic scope" value="Bacteria"/>
</dbReference>
<dbReference type="HOGENOM" id="CLU_064400_3_0_7"/>
<dbReference type="Proteomes" id="UP000008080">
    <property type="component" value="Chromosome"/>
</dbReference>
<dbReference type="GO" id="GO:0005829">
    <property type="term" value="C:cytosol"/>
    <property type="evidence" value="ECO:0007669"/>
    <property type="project" value="TreeGrafter"/>
</dbReference>
<dbReference type="GO" id="GO:0005524">
    <property type="term" value="F:ATP binding"/>
    <property type="evidence" value="ECO:0007669"/>
    <property type="project" value="UniProtKB-UniRule"/>
</dbReference>
<dbReference type="GO" id="GO:0004797">
    <property type="term" value="F:thymidine kinase activity"/>
    <property type="evidence" value="ECO:0007669"/>
    <property type="project" value="UniProtKB-UniRule"/>
</dbReference>
<dbReference type="GO" id="GO:0008270">
    <property type="term" value="F:zinc ion binding"/>
    <property type="evidence" value="ECO:0007669"/>
    <property type="project" value="UniProtKB-UniRule"/>
</dbReference>
<dbReference type="GO" id="GO:0071897">
    <property type="term" value="P:DNA biosynthetic process"/>
    <property type="evidence" value="ECO:0007669"/>
    <property type="project" value="UniProtKB-KW"/>
</dbReference>
<dbReference type="GO" id="GO:0046104">
    <property type="term" value="P:thymidine metabolic process"/>
    <property type="evidence" value="ECO:0007669"/>
    <property type="project" value="TreeGrafter"/>
</dbReference>
<dbReference type="FunFam" id="3.40.50.300:FF:000384">
    <property type="entry name" value="Thymidine kinase"/>
    <property type="match status" value="1"/>
</dbReference>
<dbReference type="Gene3D" id="3.30.60.20">
    <property type="match status" value="1"/>
</dbReference>
<dbReference type="Gene3D" id="3.40.50.300">
    <property type="entry name" value="P-loop containing nucleotide triphosphate hydrolases"/>
    <property type="match status" value="1"/>
</dbReference>
<dbReference type="HAMAP" id="MF_00124">
    <property type="entry name" value="Thymidine_kinase"/>
    <property type="match status" value="1"/>
</dbReference>
<dbReference type="InterPro" id="IPR027417">
    <property type="entry name" value="P-loop_NTPase"/>
</dbReference>
<dbReference type="InterPro" id="IPR001267">
    <property type="entry name" value="Thymidine_kinase"/>
</dbReference>
<dbReference type="InterPro" id="IPR020633">
    <property type="entry name" value="Thymidine_kinase_CS"/>
</dbReference>
<dbReference type="NCBIfam" id="NF003296">
    <property type="entry name" value="PRK04296.1-1"/>
    <property type="match status" value="1"/>
</dbReference>
<dbReference type="PANTHER" id="PTHR11441">
    <property type="entry name" value="THYMIDINE KINASE"/>
    <property type="match status" value="1"/>
</dbReference>
<dbReference type="PANTHER" id="PTHR11441:SF0">
    <property type="entry name" value="THYMIDINE KINASE, CYTOSOLIC"/>
    <property type="match status" value="1"/>
</dbReference>
<dbReference type="Pfam" id="PF00265">
    <property type="entry name" value="TK"/>
    <property type="match status" value="1"/>
</dbReference>
<dbReference type="PIRSF" id="PIRSF035805">
    <property type="entry name" value="TK_cell"/>
    <property type="match status" value="1"/>
</dbReference>
<dbReference type="SUPFAM" id="SSF57716">
    <property type="entry name" value="Glucocorticoid receptor-like (DNA-binding domain)"/>
    <property type="match status" value="1"/>
</dbReference>
<dbReference type="SUPFAM" id="SSF52540">
    <property type="entry name" value="P-loop containing nucleoside triphosphate hydrolases"/>
    <property type="match status" value="1"/>
</dbReference>
<dbReference type="PROSITE" id="PS00603">
    <property type="entry name" value="TK_CELLULAR_TYPE"/>
    <property type="match status" value="1"/>
</dbReference>
<comment type="catalytic activity">
    <reaction evidence="1">
        <text>thymidine + ATP = dTMP + ADP + H(+)</text>
        <dbReference type="Rhea" id="RHEA:19129"/>
        <dbReference type="ChEBI" id="CHEBI:15378"/>
        <dbReference type="ChEBI" id="CHEBI:17748"/>
        <dbReference type="ChEBI" id="CHEBI:30616"/>
        <dbReference type="ChEBI" id="CHEBI:63528"/>
        <dbReference type="ChEBI" id="CHEBI:456216"/>
        <dbReference type="EC" id="2.7.1.21"/>
    </reaction>
</comment>
<comment type="subunit">
    <text evidence="1">Homotetramer.</text>
</comment>
<comment type="subcellular location">
    <subcellularLocation>
        <location evidence="1">Cytoplasm</location>
    </subcellularLocation>
</comment>
<comment type="similarity">
    <text evidence="1">Belongs to the thymidine kinase family.</text>
</comment>
<keyword id="KW-0067">ATP-binding</keyword>
<keyword id="KW-0963">Cytoplasm</keyword>
<keyword id="KW-0237">DNA synthesis</keyword>
<keyword id="KW-0418">Kinase</keyword>
<keyword id="KW-0479">Metal-binding</keyword>
<keyword id="KW-0547">Nucleotide-binding</keyword>
<keyword id="KW-1185">Reference proteome</keyword>
<keyword id="KW-0808">Transferase</keyword>
<keyword id="KW-0862">Zinc</keyword>
<accession>Q6MHW4</accession>
<feature type="chain" id="PRO_0000174965" description="Thymidine kinase">
    <location>
        <begin position="1"/>
        <end position="204"/>
    </location>
</feature>
<feature type="active site" description="Proton acceptor" evidence="1">
    <location>
        <position position="92"/>
    </location>
</feature>
<feature type="binding site" evidence="1">
    <location>
        <begin position="18"/>
        <end position="25"/>
    </location>
    <ligand>
        <name>ATP</name>
        <dbReference type="ChEBI" id="CHEBI:30616"/>
    </ligand>
</feature>
<feature type="binding site" evidence="1">
    <location>
        <begin position="91"/>
        <end position="94"/>
    </location>
    <ligand>
        <name>ATP</name>
        <dbReference type="ChEBI" id="CHEBI:30616"/>
    </ligand>
</feature>
<feature type="binding site" evidence="1">
    <location>
        <position position="148"/>
    </location>
    <ligand>
        <name>Zn(2+)</name>
        <dbReference type="ChEBI" id="CHEBI:29105"/>
    </ligand>
</feature>
<feature type="binding site" evidence="1">
    <location>
        <position position="151"/>
    </location>
    <ligand>
        <name>Zn(2+)</name>
        <dbReference type="ChEBI" id="CHEBI:29105"/>
    </ligand>
</feature>
<feature type="binding site" evidence="1">
    <location>
        <position position="180"/>
    </location>
    <ligand>
        <name>Zn(2+)</name>
        <dbReference type="ChEBI" id="CHEBI:29105"/>
    </ligand>
</feature>
<feature type="binding site" evidence="1">
    <location>
        <position position="183"/>
    </location>
    <ligand>
        <name>Zn(2+)</name>
        <dbReference type="ChEBI" id="CHEBI:29105"/>
    </ligand>
</feature>
<name>KITH_BDEBA</name>
<reference key="1">
    <citation type="journal article" date="2004" name="Science">
        <title>A predator unmasked: life cycle of Bdellovibrio bacteriovorus from a genomic perspective.</title>
        <authorList>
            <person name="Rendulic S."/>
            <person name="Jagtap P."/>
            <person name="Rosinus A."/>
            <person name="Eppinger M."/>
            <person name="Baar C."/>
            <person name="Lanz C."/>
            <person name="Keller H."/>
            <person name="Lambert C."/>
            <person name="Evans K.J."/>
            <person name="Goesmann A."/>
            <person name="Meyer F."/>
            <person name="Sockett R.E."/>
            <person name="Schuster S.C."/>
        </authorList>
    </citation>
    <scope>NUCLEOTIDE SEQUENCE [LARGE SCALE GENOMIC DNA]</scope>
    <source>
        <strain>ATCC 15356 / DSM 50701 / NCIMB 9529 / HD100</strain>
    </source>
</reference>
<protein>
    <recommendedName>
        <fullName evidence="1">Thymidine kinase</fullName>
        <ecNumber evidence="1">2.7.1.21</ecNumber>
    </recommendedName>
</protein>
<proteinExistence type="inferred from homology"/>
<gene>
    <name evidence="1" type="primary">tdk</name>
    <name type="ordered locus">Bd3420</name>
</gene>